<sequence length="129" mass="14650">MREKLNLLAKLKSVVYKFDPLNPNTRSIRSFIPLTTCKRSRQLAPECSISFDLGPQNTSPVIDIKFVNGTEKSIKTDTLELMSIVESIELLKKSIRIEEIEKMKTTETTLQDILQPVNKKKDTGAKANR</sequence>
<evidence type="ECO:0000250" key="1"/>
<evidence type="ECO:0000255" key="2"/>
<evidence type="ECO:0000305" key="3"/>
<organism>
    <name type="scientific">Dictyostelium discoideum</name>
    <name type="common">Social amoeba</name>
    <dbReference type="NCBI Taxonomy" id="44689"/>
    <lineage>
        <taxon>Eukaryota</taxon>
        <taxon>Amoebozoa</taxon>
        <taxon>Evosea</taxon>
        <taxon>Eumycetozoa</taxon>
        <taxon>Dictyostelia</taxon>
        <taxon>Dictyosteliales</taxon>
        <taxon>Dictyosteliaceae</taxon>
        <taxon>Dictyostelium</taxon>
    </lineage>
</organism>
<gene>
    <name type="primary">mrpl53</name>
    <name type="ORF">DDB_G0292420</name>
</gene>
<comment type="subcellular location">
    <subcellularLocation>
        <location evidence="1">Mitochondrion</location>
    </subcellularLocation>
</comment>
<comment type="similarity">
    <text evidence="3">Belongs to the mitochondrion-specific ribosomal protein mL53 family.</text>
</comment>
<keyword id="KW-0496">Mitochondrion</keyword>
<keyword id="KW-1185">Reference proteome</keyword>
<keyword id="KW-0687">Ribonucleoprotein</keyword>
<keyword id="KW-0689">Ribosomal protein</keyword>
<keyword id="KW-0809">Transit peptide</keyword>
<protein>
    <recommendedName>
        <fullName evidence="3">Large ribosomal subunit protein mL53</fullName>
    </recommendedName>
    <alternativeName>
        <fullName evidence="3">39S ribosomal protein L53, mitochondrial</fullName>
        <shortName>L53mt</shortName>
        <shortName>MRP-L53</shortName>
    </alternativeName>
</protein>
<name>RM53_DICDI</name>
<accession>Q54D99</accession>
<proteinExistence type="inferred from homology"/>
<dbReference type="EMBL" id="AAFI02000190">
    <property type="protein sequence ID" value="EAL61189.1"/>
    <property type="molecule type" value="Genomic_DNA"/>
</dbReference>
<dbReference type="RefSeq" id="XP_629597.1">
    <property type="nucleotide sequence ID" value="XM_629595.1"/>
</dbReference>
<dbReference type="SMR" id="Q54D99"/>
<dbReference type="FunCoup" id="Q54D99">
    <property type="interactions" value="1"/>
</dbReference>
<dbReference type="PaxDb" id="44689-DDB0266373"/>
<dbReference type="EnsemblProtists" id="EAL61189">
    <property type="protein sequence ID" value="EAL61189"/>
    <property type="gene ID" value="DDB_G0292420"/>
</dbReference>
<dbReference type="GeneID" id="8628657"/>
<dbReference type="KEGG" id="ddi:DDB_G0292420"/>
<dbReference type="dictyBase" id="DDB_G0292420">
    <property type="gene designation" value="mrpl53"/>
</dbReference>
<dbReference type="VEuPathDB" id="AmoebaDB:DDB_G0292420"/>
<dbReference type="eggNOG" id="ENOG502RI5H">
    <property type="taxonomic scope" value="Eukaryota"/>
</dbReference>
<dbReference type="HOGENOM" id="CLU_1952870_0_0_1"/>
<dbReference type="InParanoid" id="Q54D99"/>
<dbReference type="OMA" id="YYNGFEQ"/>
<dbReference type="PhylomeDB" id="Q54D99"/>
<dbReference type="PRO" id="PR:Q54D99"/>
<dbReference type="Proteomes" id="UP000002195">
    <property type="component" value="Chromosome 6"/>
</dbReference>
<dbReference type="GO" id="GO:0005762">
    <property type="term" value="C:mitochondrial large ribosomal subunit"/>
    <property type="evidence" value="ECO:0000318"/>
    <property type="project" value="GO_Central"/>
</dbReference>
<dbReference type="Gene3D" id="3.40.30.10">
    <property type="entry name" value="Glutaredoxin"/>
    <property type="match status" value="1"/>
</dbReference>
<dbReference type="InterPro" id="IPR052473">
    <property type="entry name" value="mtLSU_mL53"/>
</dbReference>
<dbReference type="InterPro" id="IPR019716">
    <property type="entry name" value="Ribosomal_mL53"/>
</dbReference>
<dbReference type="PANTHER" id="PTHR33618">
    <property type="entry name" value="39S RIBOSOMAL PROTEIN L53, MITOCHONDRIAL"/>
    <property type="match status" value="1"/>
</dbReference>
<dbReference type="PANTHER" id="PTHR33618:SF1">
    <property type="entry name" value="LARGE RIBOSOMAL SUBUNIT PROTEIN ML53"/>
    <property type="match status" value="1"/>
</dbReference>
<dbReference type="Pfam" id="PF10780">
    <property type="entry name" value="MRP_L53"/>
    <property type="match status" value="1"/>
</dbReference>
<feature type="transit peptide" description="Mitochondrion" evidence="2">
    <location>
        <begin position="1"/>
        <end position="50"/>
    </location>
</feature>
<feature type="chain" id="PRO_0000328154" description="Large ribosomal subunit protein mL53">
    <location>
        <begin position="51"/>
        <end position="129"/>
    </location>
</feature>
<reference key="1">
    <citation type="journal article" date="2005" name="Nature">
        <title>The genome of the social amoeba Dictyostelium discoideum.</title>
        <authorList>
            <person name="Eichinger L."/>
            <person name="Pachebat J.A."/>
            <person name="Gloeckner G."/>
            <person name="Rajandream M.A."/>
            <person name="Sucgang R."/>
            <person name="Berriman M."/>
            <person name="Song J."/>
            <person name="Olsen R."/>
            <person name="Szafranski K."/>
            <person name="Xu Q."/>
            <person name="Tunggal B."/>
            <person name="Kummerfeld S."/>
            <person name="Madera M."/>
            <person name="Konfortov B.A."/>
            <person name="Rivero F."/>
            <person name="Bankier A.T."/>
            <person name="Lehmann R."/>
            <person name="Hamlin N."/>
            <person name="Davies R."/>
            <person name="Gaudet P."/>
            <person name="Fey P."/>
            <person name="Pilcher K."/>
            <person name="Chen G."/>
            <person name="Saunders D."/>
            <person name="Sodergren E.J."/>
            <person name="Davis P."/>
            <person name="Kerhornou A."/>
            <person name="Nie X."/>
            <person name="Hall N."/>
            <person name="Anjard C."/>
            <person name="Hemphill L."/>
            <person name="Bason N."/>
            <person name="Farbrother P."/>
            <person name="Desany B."/>
            <person name="Just E."/>
            <person name="Morio T."/>
            <person name="Rost R."/>
            <person name="Churcher C.M."/>
            <person name="Cooper J."/>
            <person name="Haydock S."/>
            <person name="van Driessche N."/>
            <person name="Cronin A."/>
            <person name="Goodhead I."/>
            <person name="Muzny D.M."/>
            <person name="Mourier T."/>
            <person name="Pain A."/>
            <person name="Lu M."/>
            <person name="Harper D."/>
            <person name="Lindsay R."/>
            <person name="Hauser H."/>
            <person name="James K.D."/>
            <person name="Quiles M."/>
            <person name="Madan Babu M."/>
            <person name="Saito T."/>
            <person name="Buchrieser C."/>
            <person name="Wardroper A."/>
            <person name="Felder M."/>
            <person name="Thangavelu M."/>
            <person name="Johnson D."/>
            <person name="Knights A."/>
            <person name="Loulseged H."/>
            <person name="Mungall K.L."/>
            <person name="Oliver K."/>
            <person name="Price C."/>
            <person name="Quail M.A."/>
            <person name="Urushihara H."/>
            <person name="Hernandez J."/>
            <person name="Rabbinowitsch E."/>
            <person name="Steffen D."/>
            <person name="Sanders M."/>
            <person name="Ma J."/>
            <person name="Kohara Y."/>
            <person name="Sharp S."/>
            <person name="Simmonds M.N."/>
            <person name="Spiegler S."/>
            <person name="Tivey A."/>
            <person name="Sugano S."/>
            <person name="White B."/>
            <person name="Walker D."/>
            <person name="Woodward J.R."/>
            <person name="Winckler T."/>
            <person name="Tanaka Y."/>
            <person name="Shaulsky G."/>
            <person name="Schleicher M."/>
            <person name="Weinstock G.M."/>
            <person name="Rosenthal A."/>
            <person name="Cox E.C."/>
            <person name="Chisholm R.L."/>
            <person name="Gibbs R.A."/>
            <person name="Loomis W.F."/>
            <person name="Platzer M."/>
            <person name="Kay R.R."/>
            <person name="Williams J.G."/>
            <person name="Dear P.H."/>
            <person name="Noegel A.A."/>
            <person name="Barrell B.G."/>
            <person name="Kuspa A."/>
        </authorList>
    </citation>
    <scope>NUCLEOTIDE SEQUENCE [LARGE SCALE GENOMIC DNA]</scope>
    <source>
        <strain>AX4</strain>
    </source>
</reference>